<evidence type="ECO:0000250" key="1">
    <source>
        <dbReference type="UniProtKB" id="Q96PV4"/>
    </source>
</evidence>
<evidence type="ECO:0000256" key="2">
    <source>
        <dbReference type="SAM" id="MobiDB-lite"/>
    </source>
</evidence>
<evidence type="ECO:0000269" key="3">
    <source>
    </source>
</evidence>
<evidence type="ECO:0000305" key="4"/>
<comment type="subcellular location">
    <subcellularLocation>
        <location evidence="1">Nucleus</location>
    </subcellularLocation>
</comment>
<comment type="tissue specificity">
    <text evidence="3">Restricted to testis, where expression is low. Not detected in the brain.</text>
</comment>
<comment type="similarity">
    <text evidence="4">Belongs to the PNMA family.</text>
</comment>
<comment type="sequence caution" evidence="4">
    <conflict type="erroneous initiation">
        <sequence resource="EMBL-CDS" id="BAD90475"/>
    </conflict>
    <text>Extended N-terminus.</text>
</comment>
<gene>
    <name type="primary">Pnma5</name>
    <name type="synonym">Kiaa1934</name>
</gene>
<name>PNMA5_MOUSE</name>
<sequence length="618" mass="69137">MAVALLDDWCKGMDLDPKKAVLIVGIPVQYTEAAINDALKEGLPPLCAYKVIGRMFRREDEAKAVLIELPEVVDYTMMPTHIPAEGGAWEVVVKPRSPDDEFMNKLIYFLRDEGRRIVDVAKALGFSTVPTGKIELKNLDQDKPKGLKSLCNNSTCYKKLKVFSGSPFPGPGEESFETWLEEVTELMQLWQVSEREKKQCLLESLRGSALSIMQALWTSNDSLTVEQCLKALKHIFGNKEDSKVLQFRFLQSSQKPAEKVSDYLLRLEPLLQKAVQQSPLSAHSADSIRLKHVLSQVSMTTGLRGKLSLLDQQGCPPTFLELMKLTRDEEEWESTVVVEEQEQVRRDSSACEAANEVVTQAEDSREVSTQTTGEEMTSVKRRRLLWRHSAGEEGQRKESGFWAESEPDEQKPYVRAQESGNERGAWAVSHPNPKEIEAQDSQEFLPVAGNRDTLTKSWGSPDKGTGDMSVAEGQQGQGKAPNFLLARNDPNKQEQIPHSSVTTKWQDRGECQRLKWGASMITRPQGNPDRSWDTSGSQDGEDGCSELRMPTGTEAAQGVEEPATGLSWAEDTSAWEQARLGRETVPRRGGRRIQPVFRIIYTALGEPHEGSTLESFRE</sequence>
<proteinExistence type="evidence at protein level"/>
<accession>Q5DTT8</accession>
<accession>A2BI36</accession>
<protein>
    <recommendedName>
        <fullName>Paraneoplastic antigen-like protein 5</fullName>
    </recommendedName>
</protein>
<reference key="1">
    <citation type="journal article" date="2009" name="PLoS Biol.">
        <title>Lineage-specific biology revealed by a finished genome assembly of the mouse.</title>
        <authorList>
            <person name="Church D.M."/>
            <person name="Goodstadt L."/>
            <person name="Hillier L.W."/>
            <person name="Zody M.C."/>
            <person name="Goldstein S."/>
            <person name="She X."/>
            <person name="Bult C.J."/>
            <person name="Agarwala R."/>
            <person name="Cherry J.L."/>
            <person name="DiCuccio M."/>
            <person name="Hlavina W."/>
            <person name="Kapustin Y."/>
            <person name="Meric P."/>
            <person name="Maglott D."/>
            <person name="Birtle Z."/>
            <person name="Marques A.C."/>
            <person name="Graves T."/>
            <person name="Zhou S."/>
            <person name="Teague B."/>
            <person name="Potamousis K."/>
            <person name="Churas C."/>
            <person name="Place M."/>
            <person name="Herschleb J."/>
            <person name="Runnheim R."/>
            <person name="Forrest D."/>
            <person name="Amos-Landgraf J."/>
            <person name="Schwartz D.C."/>
            <person name="Cheng Z."/>
            <person name="Lindblad-Toh K."/>
            <person name="Eichler E.E."/>
            <person name="Ponting C.P."/>
        </authorList>
    </citation>
    <scope>NUCLEOTIDE SEQUENCE [LARGE SCALE GENOMIC DNA]</scope>
    <source>
        <strain>C57BL/6J</strain>
    </source>
</reference>
<reference key="2">
    <citation type="submission" date="2005-02" db="EMBL/GenBank/DDBJ databases">
        <title>Prediction of the coding sequences of mouse homologues of KIAA gene. The complete nucleotide sequences of mouse KIAA-homologous cDNAs identified by screening of terminal sequences of cDNA clones randomly sampled from size-fractionated libraries.</title>
        <authorList>
            <person name="Okazaki N."/>
            <person name="Kikuno R.F."/>
            <person name="Ohara R."/>
            <person name="Inamoto S."/>
            <person name="Nagase T."/>
            <person name="Ohara O."/>
            <person name="Koga H."/>
        </authorList>
    </citation>
    <scope>NUCLEOTIDE SEQUENCE [LARGE SCALE MRNA] OF 1-447</scope>
    <source>
        <tissue>Brain</tissue>
    </source>
</reference>
<reference key="3">
    <citation type="journal article" date="2009" name="Cereb. Cortex">
        <title>Paraneoplastic antigen-like 5 gene (PNMA5) is preferentially expressed in the association areas in a primate specific manner.</title>
        <authorList>
            <person name="Takaji M."/>
            <person name="Komatsu Y."/>
            <person name="Watakabe A."/>
            <person name="Hashikawa T."/>
            <person name="Yamamori T."/>
        </authorList>
    </citation>
    <scope>TISSUE SPECIFICITY</scope>
</reference>
<reference key="4">
    <citation type="journal article" date="2010" name="Cell">
        <title>A tissue-specific atlas of mouse protein phosphorylation and expression.</title>
        <authorList>
            <person name="Huttlin E.L."/>
            <person name="Jedrychowski M.P."/>
            <person name="Elias J.E."/>
            <person name="Goswami T."/>
            <person name="Rad R."/>
            <person name="Beausoleil S.A."/>
            <person name="Villen J."/>
            <person name="Haas W."/>
            <person name="Sowa M.E."/>
            <person name="Gygi S.P."/>
        </authorList>
    </citation>
    <scope>IDENTIFICATION BY MASS SPECTROMETRY [LARGE SCALE ANALYSIS]</scope>
    <source>
        <tissue>Testis</tissue>
    </source>
</reference>
<keyword id="KW-0539">Nucleus</keyword>
<keyword id="KW-1185">Reference proteome</keyword>
<dbReference type="EMBL" id="BX813330">
    <property type="status" value="NOT_ANNOTATED_CDS"/>
    <property type="molecule type" value="Genomic_DNA"/>
</dbReference>
<dbReference type="EMBL" id="AK220432">
    <property type="protein sequence ID" value="BAD90475.1"/>
    <property type="status" value="ALT_INIT"/>
    <property type="molecule type" value="mRNA"/>
</dbReference>
<dbReference type="CCDS" id="CCDS41004.1"/>
<dbReference type="RefSeq" id="NP_001093931.1">
    <property type="nucleotide sequence ID" value="NM_001100461.3"/>
</dbReference>
<dbReference type="RefSeq" id="XP_011245927.1">
    <property type="nucleotide sequence ID" value="XM_011247625.4"/>
</dbReference>
<dbReference type="RefSeq" id="XP_011245928.1">
    <property type="nucleotide sequence ID" value="XM_011247626.4"/>
</dbReference>
<dbReference type="SMR" id="Q5DTT8"/>
<dbReference type="BioGRID" id="239551">
    <property type="interactions" value="1"/>
</dbReference>
<dbReference type="FunCoup" id="Q5DTT8">
    <property type="interactions" value="26"/>
</dbReference>
<dbReference type="STRING" id="10090.ENSMUSP00000063061"/>
<dbReference type="iPTMnet" id="Q5DTT8"/>
<dbReference type="PhosphoSitePlus" id="Q5DTT8"/>
<dbReference type="PaxDb" id="10090-ENSMUSP00000063061"/>
<dbReference type="ProteomicsDB" id="289711"/>
<dbReference type="Antibodypedia" id="63837">
    <property type="antibodies" value="97 antibodies from 16 providers"/>
</dbReference>
<dbReference type="DNASU" id="385377"/>
<dbReference type="Ensembl" id="ENSMUST00000051569.7">
    <property type="protein sequence ID" value="ENSMUSP00000063061.7"/>
    <property type="gene ID" value="ENSMUSG00000050424.10"/>
</dbReference>
<dbReference type="Ensembl" id="ENSMUST00000114540.4">
    <property type="protein sequence ID" value="ENSMUSP00000110187.4"/>
    <property type="gene ID" value="ENSMUSG00000050424.10"/>
</dbReference>
<dbReference type="GeneID" id="385377"/>
<dbReference type="KEGG" id="mmu:385377"/>
<dbReference type="UCSC" id="uc012hjz.1">
    <property type="organism name" value="mouse"/>
</dbReference>
<dbReference type="AGR" id="MGI:2180566"/>
<dbReference type="CTD" id="114824"/>
<dbReference type="MGI" id="MGI:2180566">
    <property type="gene designation" value="Pnma5"/>
</dbReference>
<dbReference type="VEuPathDB" id="HostDB:ENSMUSG00000050424"/>
<dbReference type="eggNOG" id="ENOG502SPHT">
    <property type="taxonomic scope" value="Eukaryota"/>
</dbReference>
<dbReference type="GeneTree" id="ENSGT01030000234522"/>
<dbReference type="HOGENOM" id="CLU_014694_0_1_1"/>
<dbReference type="InParanoid" id="Q5DTT8"/>
<dbReference type="OMA" id="QATEIMQ"/>
<dbReference type="OrthoDB" id="115435at2759"/>
<dbReference type="PhylomeDB" id="Q5DTT8"/>
<dbReference type="TreeFam" id="TF335054"/>
<dbReference type="BioGRID-ORCS" id="385377">
    <property type="hits" value="2 hits in 75 CRISPR screens"/>
</dbReference>
<dbReference type="PRO" id="PR:Q5DTT8"/>
<dbReference type="Proteomes" id="UP000000589">
    <property type="component" value="Chromosome X"/>
</dbReference>
<dbReference type="RNAct" id="Q5DTT8">
    <property type="molecule type" value="protein"/>
</dbReference>
<dbReference type="Bgee" id="ENSMUSG00000050424">
    <property type="expression patterns" value="Expressed in cleaving embryo and 25 other cell types or tissues"/>
</dbReference>
<dbReference type="ExpressionAtlas" id="Q5DTT8">
    <property type="expression patterns" value="baseline and differential"/>
</dbReference>
<dbReference type="GO" id="GO:0005938">
    <property type="term" value="C:cell cortex"/>
    <property type="evidence" value="ECO:0000314"/>
    <property type="project" value="MGI"/>
</dbReference>
<dbReference type="GO" id="GO:0072687">
    <property type="term" value="C:meiotic spindle"/>
    <property type="evidence" value="ECO:0000314"/>
    <property type="project" value="MGI"/>
</dbReference>
<dbReference type="GO" id="GO:0005634">
    <property type="term" value="C:nucleus"/>
    <property type="evidence" value="ECO:0000250"/>
    <property type="project" value="UniProtKB"/>
</dbReference>
<dbReference type="GO" id="GO:0007127">
    <property type="term" value="P:meiosis I"/>
    <property type="evidence" value="ECO:0000315"/>
    <property type="project" value="MGI"/>
</dbReference>
<dbReference type="InterPro" id="IPR026523">
    <property type="entry name" value="PNMA"/>
</dbReference>
<dbReference type="InterPro" id="IPR048270">
    <property type="entry name" value="PNMA_C"/>
</dbReference>
<dbReference type="InterPro" id="IPR048271">
    <property type="entry name" value="PNMA_N"/>
</dbReference>
<dbReference type="PANTHER" id="PTHR23095">
    <property type="entry name" value="PARANEOPLASTIC ANTIGEN"/>
    <property type="match status" value="1"/>
</dbReference>
<dbReference type="PANTHER" id="PTHR23095:SF4">
    <property type="entry name" value="PARANEOPLASTIC ANTIGEN-LIKE PROTEIN 5"/>
    <property type="match status" value="1"/>
</dbReference>
<dbReference type="Pfam" id="PF14893">
    <property type="entry name" value="PNMA"/>
    <property type="match status" value="1"/>
</dbReference>
<dbReference type="Pfam" id="PF20846">
    <property type="entry name" value="PNMA_N"/>
    <property type="match status" value="1"/>
</dbReference>
<organism>
    <name type="scientific">Mus musculus</name>
    <name type="common">Mouse</name>
    <dbReference type="NCBI Taxonomy" id="10090"/>
    <lineage>
        <taxon>Eukaryota</taxon>
        <taxon>Metazoa</taxon>
        <taxon>Chordata</taxon>
        <taxon>Craniata</taxon>
        <taxon>Vertebrata</taxon>
        <taxon>Euteleostomi</taxon>
        <taxon>Mammalia</taxon>
        <taxon>Eutheria</taxon>
        <taxon>Euarchontoglires</taxon>
        <taxon>Glires</taxon>
        <taxon>Rodentia</taxon>
        <taxon>Myomorpha</taxon>
        <taxon>Muroidea</taxon>
        <taxon>Muridae</taxon>
        <taxon>Murinae</taxon>
        <taxon>Mus</taxon>
        <taxon>Mus</taxon>
    </lineage>
</organism>
<feature type="chain" id="PRO_0000311218" description="Paraneoplastic antigen-like protein 5">
    <location>
        <begin position="1"/>
        <end position="618"/>
    </location>
</feature>
<feature type="region of interest" description="Disordered" evidence="2">
    <location>
        <begin position="390"/>
        <end position="409"/>
    </location>
</feature>
<feature type="region of interest" description="Disordered" evidence="2">
    <location>
        <begin position="451"/>
        <end position="475"/>
    </location>
</feature>
<feature type="region of interest" description="Disordered" evidence="2">
    <location>
        <begin position="519"/>
        <end position="549"/>
    </location>
</feature>
<feature type="compositionally biased region" description="Basic and acidic residues" evidence="2">
    <location>
        <begin position="390"/>
        <end position="399"/>
    </location>
</feature>